<proteinExistence type="inferred from homology"/>
<dbReference type="EC" id="2.4.2.9" evidence="1"/>
<dbReference type="EMBL" id="CP000304">
    <property type="protein sequence ID" value="ABP80813.1"/>
    <property type="molecule type" value="Genomic_DNA"/>
</dbReference>
<dbReference type="RefSeq" id="WP_011914258.1">
    <property type="nucleotide sequence ID" value="NC_009434.1"/>
</dbReference>
<dbReference type="SMR" id="A4VPB2"/>
<dbReference type="KEGG" id="psa:PST_3175"/>
<dbReference type="eggNOG" id="COG0035">
    <property type="taxonomic scope" value="Bacteria"/>
</dbReference>
<dbReference type="HOGENOM" id="CLU_067096_2_2_6"/>
<dbReference type="UniPathway" id="UPA00574">
    <property type="reaction ID" value="UER00636"/>
</dbReference>
<dbReference type="Proteomes" id="UP000000233">
    <property type="component" value="Chromosome"/>
</dbReference>
<dbReference type="GO" id="GO:0005525">
    <property type="term" value="F:GTP binding"/>
    <property type="evidence" value="ECO:0007669"/>
    <property type="project" value="UniProtKB-KW"/>
</dbReference>
<dbReference type="GO" id="GO:0000287">
    <property type="term" value="F:magnesium ion binding"/>
    <property type="evidence" value="ECO:0007669"/>
    <property type="project" value="UniProtKB-UniRule"/>
</dbReference>
<dbReference type="GO" id="GO:0004845">
    <property type="term" value="F:uracil phosphoribosyltransferase activity"/>
    <property type="evidence" value="ECO:0007669"/>
    <property type="project" value="UniProtKB-UniRule"/>
</dbReference>
<dbReference type="GO" id="GO:0044206">
    <property type="term" value="P:UMP salvage"/>
    <property type="evidence" value="ECO:0007669"/>
    <property type="project" value="UniProtKB-UniRule"/>
</dbReference>
<dbReference type="GO" id="GO:0006223">
    <property type="term" value="P:uracil salvage"/>
    <property type="evidence" value="ECO:0007669"/>
    <property type="project" value="InterPro"/>
</dbReference>
<dbReference type="CDD" id="cd06223">
    <property type="entry name" value="PRTases_typeI"/>
    <property type="match status" value="1"/>
</dbReference>
<dbReference type="FunFam" id="3.40.50.2020:FF:000003">
    <property type="entry name" value="Uracil phosphoribosyltransferase"/>
    <property type="match status" value="1"/>
</dbReference>
<dbReference type="Gene3D" id="3.40.50.2020">
    <property type="match status" value="1"/>
</dbReference>
<dbReference type="HAMAP" id="MF_01218_B">
    <property type="entry name" value="Upp_B"/>
    <property type="match status" value="1"/>
</dbReference>
<dbReference type="InterPro" id="IPR000836">
    <property type="entry name" value="PRibTrfase_dom"/>
</dbReference>
<dbReference type="InterPro" id="IPR029057">
    <property type="entry name" value="PRTase-like"/>
</dbReference>
<dbReference type="InterPro" id="IPR034332">
    <property type="entry name" value="Upp_B"/>
</dbReference>
<dbReference type="InterPro" id="IPR050054">
    <property type="entry name" value="UPRTase/APRTase"/>
</dbReference>
<dbReference type="InterPro" id="IPR005765">
    <property type="entry name" value="Ura_phspho_trans"/>
</dbReference>
<dbReference type="NCBIfam" id="NF001097">
    <property type="entry name" value="PRK00129.1"/>
    <property type="match status" value="1"/>
</dbReference>
<dbReference type="NCBIfam" id="TIGR01091">
    <property type="entry name" value="upp"/>
    <property type="match status" value="1"/>
</dbReference>
<dbReference type="PANTHER" id="PTHR32315">
    <property type="entry name" value="ADENINE PHOSPHORIBOSYLTRANSFERASE"/>
    <property type="match status" value="1"/>
</dbReference>
<dbReference type="PANTHER" id="PTHR32315:SF4">
    <property type="entry name" value="URACIL PHOSPHORIBOSYLTRANSFERASE, CHLOROPLASTIC"/>
    <property type="match status" value="1"/>
</dbReference>
<dbReference type="Pfam" id="PF14681">
    <property type="entry name" value="UPRTase"/>
    <property type="match status" value="1"/>
</dbReference>
<dbReference type="SUPFAM" id="SSF53271">
    <property type="entry name" value="PRTase-like"/>
    <property type="match status" value="1"/>
</dbReference>
<evidence type="ECO:0000255" key="1">
    <source>
        <dbReference type="HAMAP-Rule" id="MF_01218"/>
    </source>
</evidence>
<keyword id="KW-0021">Allosteric enzyme</keyword>
<keyword id="KW-0328">Glycosyltransferase</keyword>
<keyword id="KW-0342">GTP-binding</keyword>
<keyword id="KW-0460">Magnesium</keyword>
<keyword id="KW-0547">Nucleotide-binding</keyword>
<keyword id="KW-1185">Reference proteome</keyword>
<keyword id="KW-0808">Transferase</keyword>
<comment type="function">
    <text evidence="1">Catalyzes the conversion of uracil and 5-phospho-alpha-D-ribose 1-diphosphate (PRPP) to UMP and diphosphate.</text>
</comment>
<comment type="catalytic activity">
    <reaction evidence="1">
        <text>UMP + diphosphate = 5-phospho-alpha-D-ribose 1-diphosphate + uracil</text>
        <dbReference type="Rhea" id="RHEA:13017"/>
        <dbReference type="ChEBI" id="CHEBI:17568"/>
        <dbReference type="ChEBI" id="CHEBI:33019"/>
        <dbReference type="ChEBI" id="CHEBI:57865"/>
        <dbReference type="ChEBI" id="CHEBI:58017"/>
        <dbReference type="EC" id="2.4.2.9"/>
    </reaction>
</comment>
<comment type="cofactor">
    <cofactor evidence="1">
        <name>Mg(2+)</name>
        <dbReference type="ChEBI" id="CHEBI:18420"/>
    </cofactor>
    <text evidence="1">Binds 1 Mg(2+) ion per subunit. The magnesium is bound as Mg-PRPP.</text>
</comment>
<comment type="activity regulation">
    <text evidence="1">Allosterically activated by GTP.</text>
</comment>
<comment type="pathway">
    <text evidence="1">Pyrimidine metabolism; UMP biosynthesis via salvage pathway; UMP from uracil: step 1/1.</text>
</comment>
<comment type="similarity">
    <text evidence="1">Belongs to the UPRTase family.</text>
</comment>
<sequence length="212" mass="22965">MPIREIRHPLIRHKLGLMRRADISTKNFRELAQEVGSILTYEATSDLPLEHYNIDGWCGPVQVEKISGKKITVVPILRAGIGMLDGVLSLIPGAKVSAVGIARNEETFKAQTYLEKLVPEIEQRLAIIIDPMLATGGSMVATIDMLKKAGCKEIRALVLVAAPEGIAAVEAAHPDVLILTASIDERLDEHGYIVPGLGDAGDKIFGTKQKDI</sequence>
<gene>
    <name evidence="1" type="primary">upp</name>
    <name type="ordered locus">PST_3175</name>
</gene>
<protein>
    <recommendedName>
        <fullName evidence="1">Uracil phosphoribosyltransferase</fullName>
        <ecNumber evidence="1">2.4.2.9</ecNumber>
    </recommendedName>
    <alternativeName>
        <fullName evidence="1">UMP pyrophosphorylase</fullName>
    </alternativeName>
    <alternativeName>
        <fullName evidence="1">UPRTase</fullName>
    </alternativeName>
</protein>
<organism>
    <name type="scientific">Stutzerimonas stutzeri (strain A1501)</name>
    <name type="common">Pseudomonas stutzeri</name>
    <dbReference type="NCBI Taxonomy" id="379731"/>
    <lineage>
        <taxon>Bacteria</taxon>
        <taxon>Pseudomonadati</taxon>
        <taxon>Pseudomonadota</taxon>
        <taxon>Gammaproteobacteria</taxon>
        <taxon>Pseudomonadales</taxon>
        <taxon>Pseudomonadaceae</taxon>
        <taxon>Stutzerimonas</taxon>
    </lineage>
</organism>
<accession>A4VPB2</accession>
<feature type="chain" id="PRO_1000053768" description="Uracil phosphoribosyltransferase">
    <location>
        <begin position="1"/>
        <end position="212"/>
    </location>
</feature>
<feature type="binding site" evidence="1">
    <location>
        <position position="78"/>
    </location>
    <ligand>
        <name>5-phospho-alpha-D-ribose 1-diphosphate</name>
        <dbReference type="ChEBI" id="CHEBI:58017"/>
    </ligand>
</feature>
<feature type="binding site" evidence="1">
    <location>
        <position position="103"/>
    </location>
    <ligand>
        <name>5-phospho-alpha-D-ribose 1-diphosphate</name>
        <dbReference type="ChEBI" id="CHEBI:58017"/>
    </ligand>
</feature>
<feature type="binding site" evidence="1">
    <location>
        <begin position="130"/>
        <end position="138"/>
    </location>
    <ligand>
        <name>5-phospho-alpha-D-ribose 1-diphosphate</name>
        <dbReference type="ChEBI" id="CHEBI:58017"/>
    </ligand>
</feature>
<feature type="binding site" evidence="1">
    <location>
        <position position="193"/>
    </location>
    <ligand>
        <name>uracil</name>
        <dbReference type="ChEBI" id="CHEBI:17568"/>
    </ligand>
</feature>
<feature type="binding site" evidence="1">
    <location>
        <begin position="198"/>
        <end position="200"/>
    </location>
    <ligand>
        <name>uracil</name>
        <dbReference type="ChEBI" id="CHEBI:17568"/>
    </ligand>
</feature>
<feature type="binding site" evidence="1">
    <location>
        <position position="199"/>
    </location>
    <ligand>
        <name>5-phospho-alpha-D-ribose 1-diphosphate</name>
        <dbReference type="ChEBI" id="CHEBI:58017"/>
    </ligand>
</feature>
<name>UPP_STUS1</name>
<reference key="1">
    <citation type="journal article" date="2008" name="Proc. Natl. Acad. Sci. U.S.A.">
        <title>Nitrogen fixation island and rhizosphere competence traits in the genome of root-associated Pseudomonas stutzeri A1501.</title>
        <authorList>
            <person name="Yan Y."/>
            <person name="Yang J."/>
            <person name="Dou Y."/>
            <person name="Chen M."/>
            <person name="Ping S."/>
            <person name="Peng J."/>
            <person name="Lu W."/>
            <person name="Zhang W."/>
            <person name="Yao Z."/>
            <person name="Li H."/>
            <person name="Liu W."/>
            <person name="He S."/>
            <person name="Geng L."/>
            <person name="Zhang X."/>
            <person name="Yang F."/>
            <person name="Yu H."/>
            <person name="Zhan Y."/>
            <person name="Li D."/>
            <person name="Lin Z."/>
            <person name="Wang Y."/>
            <person name="Elmerich C."/>
            <person name="Lin M."/>
            <person name="Jin Q."/>
        </authorList>
    </citation>
    <scope>NUCLEOTIDE SEQUENCE [LARGE SCALE GENOMIC DNA]</scope>
    <source>
        <strain>A1501</strain>
    </source>
</reference>